<reference key="1">
    <citation type="submission" date="2007-09" db="EMBL/GenBank/DDBJ databases">
        <title>Complete genome sequence of Rickettsia canadensis.</title>
        <authorList>
            <person name="Madan A."/>
            <person name="Fahey J."/>
            <person name="Helton E."/>
            <person name="Ketteman M."/>
            <person name="Madan A."/>
            <person name="Rodrigues S."/>
            <person name="Sanchez A."/>
            <person name="Whiting M."/>
            <person name="Dasch G."/>
            <person name="Eremeeva M."/>
        </authorList>
    </citation>
    <scope>NUCLEOTIDE SEQUENCE [LARGE SCALE GENOMIC DNA]</scope>
    <source>
        <strain>McKiel</strain>
    </source>
</reference>
<organism>
    <name type="scientific">Rickettsia canadensis (strain McKiel)</name>
    <dbReference type="NCBI Taxonomy" id="293613"/>
    <lineage>
        <taxon>Bacteria</taxon>
        <taxon>Pseudomonadati</taxon>
        <taxon>Pseudomonadota</taxon>
        <taxon>Alphaproteobacteria</taxon>
        <taxon>Rickettsiales</taxon>
        <taxon>Rickettsiaceae</taxon>
        <taxon>Rickettsieae</taxon>
        <taxon>Rickettsia</taxon>
        <taxon>belli group</taxon>
    </lineage>
</organism>
<sequence length="63" mass="7171">MNNNINHIKITQVKSAIGRKYDQRLTLVGLGLNKINKTVILKNTNSIKGMVEKVKHLLKIENM</sequence>
<name>RL30_RICCK</name>
<evidence type="ECO:0000255" key="1">
    <source>
        <dbReference type="HAMAP-Rule" id="MF_01371"/>
    </source>
</evidence>
<evidence type="ECO:0000305" key="2"/>
<proteinExistence type="inferred from homology"/>
<protein>
    <recommendedName>
        <fullName evidence="1">Large ribosomal subunit protein uL30</fullName>
    </recommendedName>
    <alternativeName>
        <fullName evidence="2">50S ribosomal protein L30</fullName>
    </alternativeName>
</protein>
<keyword id="KW-0687">Ribonucleoprotein</keyword>
<keyword id="KW-0689">Ribosomal protein</keyword>
<dbReference type="EMBL" id="CP000409">
    <property type="protein sequence ID" value="ABV73781.1"/>
    <property type="molecule type" value="Genomic_DNA"/>
</dbReference>
<dbReference type="RefSeq" id="WP_012148976.1">
    <property type="nucleotide sequence ID" value="NC_009879.1"/>
</dbReference>
<dbReference type="SMR" id="A8EZJ8"/>
<dbReference type="STRING" id="293613.A1E_04280"/>
<dbReference type="KEGG" id="rcm:A1E_04280"/>
<dbReference type="eggNOG" id="COG1841">
    <property type="taxonomic scope" value="Bacteria"/>
</dbReference>
<dbReference type="HOGENOM" id="CLU_131047_1_5_5"/>
<dbReference type="Proteomes" id="UP000007056">
    <property type="component" value="Chromosome"/>
</dbReference>
<dbReference type="GO" id="GO:0022625">
    <property type="term" value="C:cytosolic large ribosomal subunit"/>
    <property type="evidence" value="ECO:0007669"/>
    <property type="project" value="TreeGrafter"/>
</dbReference>
<dbReference type="GO" id="GO:0003735">
    <property type="term" value="F:structural constituent of ribosome"/>
    <property type="evidence" value="ECO:0007669"/>
    <property type="project" value="InterPro"/>
</dbReference>
<dbReference type="GO" id="GO:0006412">
    <property type="term" value="P:translation"/>
    <property type="evidence" value="ECO:0007669"/>
    <property type="project" value="UniProtKB-UniRule"/>
</dbReference>
<dbReference type="CDD" id="cd01658">
    <property type="entry name" value="Ribosomal_L30"/>
    <property type="match status" value="1"/>
</dbReference>
<dbReference type="Gene3D" id="3.30.1390.20">
    <property type="entry name" value="Ribosomal protein L30, ferredoxin-like fold domain"/>
    <property type="match status" value="1"/>
</dbReference>
<dbReference type="HAMAP" id="MF_01371_B">
    <property type="entry name" value="Ribosomal_uL30_B"/>
    <property type="match status" value="1"/>
</dbReference>
<dbReference type="InterPro" id="IPR036919">
    <property type="entry name" value="Ribo_uL30_ferredoxin-like_sf"/>
</dbReference>
<dbReference type="InterPro" id="IPR005996">
    <property type="entry name" value="Ribosomal_uL30_bac-type"/>
</dbReference>
<dbReference type="InterPro" id="IPR016082">
    <property type="entry name" value="Ribosomal_uL30_ferredoxin-like"/>
</dbReference>
<dbReference type="NCBIfam" id="TIGR01308">
    <property type="entry name" value="rpmD_bact"/>
    <property type="match status" value="1"/>
</dbReference>
<dbReference type="PANTHER" id="PTHR15892:SF2">
    <property type="entry name" value="LARGE RIBOSOMAL SUBUNIT PROTEIN UL30M"/>
    <property type="match status" value="1"/>
</dbReference>
<dbReference type="PANTHER" id="PTHR15892">
    <property type="entry name" value="MITOCHONDRIAL RIBOSOMAL PROTEIN L30"/>
    <property type="match status" value="1"/>
</dbReference>
<dbReference type="Pfam" id="PF00327">
    <property type="entry name" value="Ribosomal_L30"/>
    <property type="match status" value="1"/>
</dbReference>
<dbReference type="PIRSF" id="PIRSF002211">
    <property type="entry name" value="Ribosomal_L30_bac-type"/>
    <property type="match status" value="1"/>
</dbReference>
<dbReference type="SUPFAM" id="SSF55129">
    <property type="entry name" value="Ribosomal protein L30p/L7e"/>
    <property type="match status" value="1"/>
</dbReference>
<feature type="chain" id="PRO_1000056101" description="Large ribosomal subunit protein uL30">
    <location>
        <begin position="1"/>
        <end position="63"/>
    </location>
</feature>
<gene>
    <name evidence="1" type="primary">rpmD</name>
    <name type="ordered locus">A1E_04280</name>
</gene>
<accession>A8EZJ8</accession>
<comment type="subunit">
    <text evidence="1">Part of the 50S ribosomal subunit.</text>
</comment>
<comment type="similarity">
    <text evidence="1">Belongs to the universal ribosomal protein uL30 family.</text>
</comment>